<accession>A4WLQ3</accession>
<evidence type="ECO:0000255" key="1">
    <source>
        <dbReference type="HAMAP-Rule" id="MF_00306"/>
    </source>
</evidence>
<organism>
    <name type="scientific">Pyrobaculum arsenaticum (strain DSM 13514 / JCM 11321 / PZ6)</name>
    <dbReference type="NCBI Taxonomy" id="340102"/>
    <lineage>
        <taxon>Archaea</taxon>
        <taxon>Thermoproteota</taxon>
        <taxon>Thermoprotei</taxon>
        <taxon>Thermoproteales</taxon>
        <taxon>Thermoproteaceae</taxon>
        <taxon>Pyrobaculum</taxon>
    </lineage>
</organism>
<name>SRP54_PYRAR</name>
<keyword id="KW-0963">Cytoplasm</keyword>
<keyword id="KW-0342">GTP-binding</keyword>
<keyword id="KW-0378">Hydrolase</keyword>
<keyword id="KW-0547">Nucleotide-binding</keyword>
<keyword id="KW-0687">Ribonucleoprotein</keyword>
<keyword id="KW-0694">RNA-binding</keyword>
<keyword id="KW-0733">Signal recognition particle</keyword>
<comment type="function">
    <text evidence="1">Involved in targeting and insertion of nascent membrane proteins into the cytoplasmic membrane. Binds to the hydrophobic signal sequence of the ribosome-nascent chain (RNC) as it emerges from the ribosomes. The SRP-RNC complex is then targeted to the cytoplasmic membrane where it interacts with the SRP receptor FtsY.</text>
</comment>
<comment type="catalytic activity">
    <reaction evidence="1">
        <text>GTP + H2O = GDP + phosphate + H(+)</text>
        <dbReference type="Rhea" id="RHEA:19669"/>
        <dbReference type="ChEBI" id="CHEBI:15377"/>
        <dbReference type="ChEBI" id="CHEBI:15378"/>
        <dbReference type="ChEBI" id="CHEBI:37565"/>
        <dbReference type="ChEBI" id="CHEBI:43474"/>
        <dbReference type="ChEBI" id="CHEBI:58189"/>
        <dbReference type="EC" id="3.6.5.4"/>
    </reaction>
</comment>
<comment type="subunit">
    <text evidence="1">Part of the signal recognition particle protein translocation system, which is composed of SRP and FtsY. Archaeal SRP consists of a 7S RNA molecule of 300 nucleotides and two protein subunits: SRP54 and SRP19.</text>
</comment>
<comment type="subcellular location">
    <subcellularLocation>
        <location evidence="1">Cytoplasm</location>
    </subcellularLocation>
    <text evidence="1">The SRP-RNC complex is targeted to the cytoplasmic membrane.</text>
</comment>
<comment type="domain">
    <text evidence="1">Composed of three domains: the N-terminal N domain, which is responsible for interactions with the ribosome, the central G domain, which binds GTP, and the C-terminal M domain, which binds the RNA and the signal sequence of the RNC.</text>
</comment>
<comment type="similarity">
    <text evidence="1">Belongs to the GTP-binding SRP family. SRP54 subfamily.</text>
</comment>
<reference key="1">
    <citation type="submission" date="2007-04" db="EMBL/GenBank/DDBJ databases">
        <title>Complete sequence of Pyrobaculum arsenaticum DSM 13514.</title>
        <authorList>
            <consortium name="US DOE Joint Genome Institute"/>
            <person name="Copeland A."/>
            <person name="Lucas S."/>
            <person name="Lapidus A."/>
            <person name="Barry K."/>
            <person name="Glavina del Rio T."/>
            <person name="Dalin E."/>
            <person name="Tice H."/>
            <person name="Pitluck S."/>
            <person name="Chain P."/>
            <person name="Malfatti S."/>
            <person name="Shin M."/>
            <person name="Vergez L."/>
            <person name="Schmutz J."/>
            <person name="Larimer F."/>
            <person name="Land M."/>
            <person name="Hauser L."/>
            <person name="Kyrpides N."/>
            <person name="Mikhailova N."/>
            <person name="Cozen A.E."/>
            <person name="Fitz-Gibbon S.T."/>
            <person name="House C.H."/>
            <person name="Saltikov C."/>
            <person name="Lowe T.M."/>
            <person name="Richardson P."/>
        </authorList>
    </citation>
    <scope>NUCLEOTIDE SEQUENCE [LARGE SCALE GENOMIC DNA]</scope>
    <source>
        <strain>ATCC 700994 / DSM 13514 / JCM 11321 / PZ6</strain>
    </source>
</reference>
<protein>
    <recommendedName>
        <fullName evidence="1">Signal recognition particle 54 kDa protein</fullName>
        <shortName evidence="1">SRP54</shortName>
        <ecNumber evidence="1">3.6.5.4</ecNumber>
    </recommendedName>
</protein>
<dbReference type="EC" id="3.6.5.4" evidence="1"/>
<dbReference type="EMBL" id="CP000660">
    <property type="protein sequence ID" value="ABP51320.1"/>
    <property type="molecule type" value="Genomic_DNA"/>
</dbReference>
<dbReference type="SMR" id="A4WLQ3"/>
<dbReference type="STRING" id="340102.Pars_1769"/>
<dbReference type="KEGG" id="pas:Pars_1769"/>
<dbReference type="HOGENOM" id="CLU_009301_6_0_2"/>
<dbReference type="OrthoDB" id="52849at2157"/>
<dbReference type="PhylomeDB" id="A4WLQ3"/>
<dbReference type="Proteomes" id="UP000001567">
    <property type="component" value="Chromosome"/>
</dbReference>
<dbReference type="GO" id="GO:0048500">
    <property type="term" value="C:signal recognition particle"/>
    <property type="evidence" value="ECO:0007669"/>
    <property type="project" value="UniProtKB-UniRule"/>
</dbReference>
<dbReference type="GO" id="GO:0008312">
    <property type="term" value="F:7S RNA binding"/>
    <property type="evidence" value="ECO:0007669"/>
    <property type="project" value="UniProtKB-UniRule"/>
</dbReference>
<dbReference type="GO" id="GO:0016887">
    <property type="term" value="F:ATP hydrolysis activity"/>
    <property type="evidence" value="ECO:0007669"/>
    <property type="project" value="InterPro"/>
</dbReference>
<dbReference type="GO" id="GO:0005525">
    <property type="term" value="F:GTP binding"/>
    <property type="evidence" value="ECO:0007669"/>
    <property type="project" value="UniProtKB-UniRule"/>
</dbReference>
<dbReference type="GO" id="GO:0003924">
    <property type="term" value="F:GTPase activity"/>
    <property type="evidence" value="ECO:0007669"/>
    <property type="project" value="UniProtKB-UniRule"/>
</dbReference>
<dbReference type="GO" id="GO:0006614">
    <property type="term" value="P:SRP-dependent cotranslational protein targeting to membrane"/>
    <property type="evidence" value="ECO:0007669"/>
    <property type="project" value="InterPro"/>
</dbReference>
<dbReference type="CDD" id="cd17875">
    <property type="entry name" value="SRP54_G"/>
    <property type="match status" value="1"/>
</dbReference>
<dbReference type="Gene3D" id="3.40.50.300">
    <property type="entry name" value="P-loop containing nucleotide triphosphate hydrolases"/>
    <property type="match status" value="1"/>
</dbReference>
<dbReference type="Gene3D" id="1.20.120.140">
    <property type="entry name" value="Signal recognition particle SRP54, nucleotide-binding domain"/>
    <property type="match status" value="1"/>
</dbReference>
<dbReference type="Gene3D" id="1.10.260.30">
    <property type="entry name" value="Signal recognition particle, SRP54 subunit, M-domain"/>
    <property type="match status" value="1"/>
</dbReference>
<dbReference type="HAMAP" id="MF_00306">
    <property type="entry name" value="SRP54"/>
    <property type="match status" value="1"/>
</dbReference>
<dbReference type="InterPro" id="IPR003593">
    <property type="entry name" value="AAA+_ATPase"/>
</dbReference>
<dbReference type="InterPro" id="IPR027417">
    <property type="entry name" value="P-loop_NTPase"/>
</dbReference>
<dbReference type="InterPro" id="IPR036891">
    <property type="entry name" value="Signal_recog_part_SRP54_M_sf"/>
</dbReference>
<dbReference type="InterPro" id="IPR013822">
    <property type="entry name" value="Signal_recog_particl_SRP54_hlx"/>
</dbReference>
<dbReference type="InterPro" id="IPR004125">
    <property type="entry name" value="Signal_recog_particle_SRP54_M"/>
</dbReference>
<dbReference type="InterPro" id="IPR036225">
    <property type="entry name" value="SRP/SRP_N"/>
</dbReference>
<dbReference type="InterPro" id="IPR022941">
    <property type="entry name" value="SRP54"/>
</dbReference>
<dbReference type="InterPro" id="IPR000897">
    <property type="entry name" value="SRP54_GTPase_dom"/>
</dbReference>
<dbReference type="InterPro" id="IPR042101">
    <property type="entry name" value="SRP54_N_sf"/>
</dbReference>
<dbReference type="PANTHER" id="PTHR11564">
    <property type="entry name" value="SIGNAL RECOGNITION PARTICLE 54K PROTEIN SRP54"/>
    <property type="match status" value="1"/>
</dbReference>
<dbReference type="PANTHER" id="PTHR11564:SF5">
    <property type="entry name" value="SIGNAL RECOGNITION PARTICLE SUBUNIT SRP54"/>
    <property type="match status" value="1"/>
</dbReference>
<dbReference type="Pfam" id="PF00448">
    <property type="entry name" value="SRP54"/>
    <property type="match status" value="1"/>
</dbReference>
<dbReference type="Pfam" id="PF02881">
    <property type="entry name" value="SRP54_N"/>
    <property type="match status" value="1"/>
</dbReference>
<dbReference type="Pfam" id="PF02978">
    <property type="entry name" value="SRP_SPB"/>
    <property type="match status" value="1"/>
</dbReference>
<dbReference type="SMART" id="SM00382">
    <property type="entry name" value="AAA"/>
    <property type="match status" value="1"/>
</dbReference>
<dbReference type="SMART" id="SM00962">
    <property type="entry name" value="SRP54"/>
    <property type="match status" value="1"/>
</dbReference>
<dbReference type="SMART" id="SM00963">
    <property type="entry name" value="SRP54_N"/>
    <property type="match status" value="1"/>
</dbReference>
<dbReference type="SUPFAM" id="SSF47364">
    <property type="entry name" value="Domain of the SRP/SRP receptor G-proteins"/>
    <property type="match status" value="1"/>
</dbReference>
<dbReference type="SUPFAM" id="SSF52540">
    <property type="entry name" value="P-loop containing nucleoside triphosphate hydrolases"/>
    <property type="match status" value="1"/>
</dbReference>
<dbReference type="SUPFAM" id="SSF47446">
    <property type="entry name" value="Signal peptide-binding domain"/>
    <property type="match status" value="1"/>
</dbReference>
<feature type="chain" id="PRO_0000300759" description="Signal recognition particle 54 kDa protein">
    <location>
        <begin position="1"/>
        <end position="433"/>
    </location>
</feature>
<feature type="binding site" evidence="1">
    <location>
        <begin position="106"/>
        <end position="113"/>
    </location>
    <ligand>
        <name>GTP</name>
        <dbReference type="ChEBI" id="CHEBI:37565"/>
    </ligand>
</feature>
<feature type="binding site" evidence="1">
    <location>
        <begin position="186"/>
        <end position="190"/>
    </location>
    <ligand>
        <name>GTP</name>
        <dbReference type="ChEBI" id="CHEBI:37565"/>
    </ligand>
</feature>
<feature type="binding site" evidence="1">
    <location>
        <begin position="244"/>
        <end position="247"/>
    </location>
    <ligand>
        <name>GTP</name>
        <dbReference type="ChEBI" id="CHEBI:37565"/>
    </ligand>
</feature>
<sequence>MKALTELFSKLVEKIRDVEYIDEATLQEIAREIQRTLLKADVPLDLVKTFTDNAVKRIREEKPPAGIPPREYLIYVLYEELVKLMGGEQPAEFKPTKKPYIVLLLGVEGSGKTTTSAKLARYLMKRGYKVGMVETDTIRPAAFDQLRQLAEKIGAPFYGERDGKDAVEIARRGVANLKGVDVLIIDTAGRHRNEEALLQEVKAIYDAVNPDEVVLVVDATVGKLAAAQAEAFMKYLPIHTVIITKMDSTARGGGALAAVAKTGARVKFIGVGEDVEELEPFNPRKFVARLLGMGDLDALLEKIKAVFEEEEVLEEIESGRLDLLTFKKQIDSLMKLGPLSKVFQLLPGGLAAKISEEQIELSQKNLKKWRAILSSMTMEELKNPDILNASRIRRIALGAGVTPKDVKEMLTVYENLKKMSKTLKRQMRLRMAR</sequence>
<proteinExistence type="inferred from homology"/>
<gene>
    <name evidence="1" type="primary">srp54</name>
    <name type="ordered locus">Pars_1769</name>
</gene>